<comment type="catalytic activity">
    <reaction evidence="1">
        <text>orotidine 5'-phosphate + H(+) = UMP + CO2</text>
        <dbReference type="Rhea" id="RHEA:11596"/>
        <dbReference type="ChEBI" id="CHEBI:15378"/>
        <dbReference type="ChEBI" id="CHEBI:16526"/>
        <dbReference type="ChEBI" id="CHEBI:57538"/>
        <dbReference type="ChEBI" id="CHEBI:57865"/>
        <dbReference type="EC" id="4.1.1.23"/>
    </reaction>
</comment>
<comment type="pathway">
    <text evidence="1">Pyrimidine metabolism; UMP biosynthesis via de novo pathway; UMP from orotate: step 2/2.</text>
</comment>
<comment type="similarity">
    <text evidence="1">Belongs to the OMP decarboxylase family. Type 2 subfamily.</text>
</comment>
<reference key="1">
    <citation type="submission" date="2008-05" db="EMBL/GenBank/DDBJ databases">
        <title>Complete sequence of chromosome 1 of Ralstonia pickettii 12J.</title>
        <authorList>
            <person name="Lucas S."/>
            <person name="Copeland A."/>
            <person name="Lapidus A."/>
            <person name="Glavina del Rio T."/>
            <person name="Dalin E."/>
            <person name="Tice H."/>
            <person name="Bruce D."/>
            <person name="Goodwin L."/>
            <person name="Pitluck S."/>
            <person name="Meincke L."/>
            <person name="Brettin T."/>
            <person name="Detter J.C."/>
            <person name="Han C."/>
            <person name="Kuske C.R."/>
            <person name="Schmutz J."/>
            <person name="Larimer F."/>
            <person name="Land M."/>
            <person name="Hauser L."/>
            <person name="Kyrpides N."/>
            <person name="Mikhailova N."/>
            <person name="Marsh T."/>
            <person name="Richardson P."/>
        </authorList>
    </citation>
    <scope>NUCLEOTIDE SEQUENCE [LARGE SCALE GENOMIC DNA]</scope>
    <source>
        <strain>12J</strain>
    </source>
</reference>
<name>PYRF_RALPJ</name>
<sequence>MRFTEQLAAAWQRNNSLLCVGLDPDPARLPASLTGTGGAIFSFCRAIVDATADLVCAFKPQIAYFASQRAEDQLEQLISYIHEAYPGVPVILDAKRGDIGSTAEHYAKEAFERYQADAVTVSPYMGFDSMQPYLAHADKGVIVLCRTSNAGGSDVQFLETDGRPVYQVVAERARDVWNTSGQMGLVVGATFPEEIAKVREIVGDMPLLIPGVGAQGGDIEATVRAGRTADGTGMMINSSRAILYASTDSDFADAARRVALATRDQINQFRN</sequence>
<proteinExistence type="inferred from homology"/>
<dbReference type="EC" id="4.1.1.23" evidence="1"/>
<dbReference type="EMBL" id="CP001068">
    <property type="protein sequence ID" value="ACD28141.1"/>
    <property type="molecule type" value="Genomic_DNA"/>
</dbReference>
<dbReference type="SMR" id="B2UCD6"/>
<dbReference type="STRING" id="402626.Rpic_3018"/>
<dbReference type="KEGG" id="rpi:Rpic_3018"/>
<dbReference type="PATRIC" id="fig|402626.5.peg.4154"/>
<dbReference type="eggNOG" id="COG0284">
    <property type="taxonomic scope" value="Bacteria"/>
</dbReference>
<dbReference type="HOGENOM" id="CLU_060704_1_0_4"/>
<dbReference type="UniPathway" id="UPA00070">
    <property type="reaction ID" value="UER00120"/>
</dbReference>
<dbReference type="GO" id="GO:0004590">
    <property type="term" value="F:orotidine-5'-phosphate decarboxylase activity"/>
    <property type="evidence" value="ECO:0007669"/>
    <property type="project" value="UniProtKB-UniRule"/>
</dbReference>
<dbReference type="GO" id="GO:0006207">
    <property type="term" value="P:'de novo' pyrimidine nucleobase biosynthetic process"/>
    <property type="evidence" value="ECO:0007669"/>
    <property type="project" value="InterPro"/>
</dbReference>
<dbReference type="GO" id="GO:0044205">
    <property type="term" value="P:'de novo' UMP biosynthetic process"/>
    <property type="evidence" value="ECO:0007669"/>
    <property type="project" value="UniProtKB-UniRule"/>
</dbReference>
<dbReference type="CDD" id="cd04725">
    <property type="entry name" value="OMP_decarboxylase_like"/>
    <property type="match status" value="1"/>
</dbReference>
<dbReference type="Gene3D" id="3.20.20.70">
    <property type="entry name" value="Aldolase class I"/>
    <property type="match status" value="1"/>
</dbReference>
<dbReference type="HAMAP" id="MF_01215">
    <property type="entry name" value="OMPdecase_type2"/>
    <property type="match status" value="1"/>
</dbReference>
<dbReference type="InterPro" id="IPR013785">
    <property type="entry name" value="Aldolase_TIM"/>
</dbReference>
<dbReference type="InterPro" id="IPR018089">
    <property type="entry name" value="OMPdecase_AS"/>
</dbReference>
<dbReference type="InterPro" id="IPR011995">
    <property type="entry name" value="OMPdecase_type-2"/>
</dbReference>
<dbReference type="InterPro" id="IPR001754">
    <property type="entry name" value="OMPdeCOase_dom"/>
</dbReference>
<dbReference type="InterPro" id="IPR011060">
    <property type="entry name" value="RibuloseP-bd_barrel"/>
</dbReference>
<dbReference type="NCBIfam" id="TIGR02127">
    <property type="entry name" value="pyrF_sub2"/>
    <property type="match status" value="1"/>
</dbReference>
<dbReference type="PANTHER" id="PTHR43375">
    <property type="entry name" value="OROTIDINE 5'-PHOSPHATE DECARBOXYLASE"/>
    <property type="match status" value="1"/>
</dbReference>
<dbReference type="PANTHER" id="PTHR43375:SF1">
    <property type="entry name" value="OROTIDINE 5'-PHOSPHATE DECARBOXYLASE"/>
    <property type="match status" value="1"/>
</dbReference>
<dbReference type="Pfam" id="PF00215">
    <property type="entry name" value="OMPdecase"/>
    <property type="match status" value="1"/>
</dbReference>
<dbReference type="SMART" id="SM00934">
    <property type="entry name" value="OMPdecase"/>
    <property type="match status" value="1"/>
</dbReference>
<dbReference type="SUPFAM" id="SSF51366">
    <property type="entry name" value="Ribulose-phoshate binding barrel"/>
    <property type="match status" value="1"/>
</dbReference>
<dbReference type="PROSITE" id="PS00156">
    <property type="entry name" value="OMPDECASE"/>
    <property type="match status" value="1"/>
</dbReference>
<accession>B2UCD6</accession>
<feature type="chain" id="PRO_1000138960" description="Orotidine 5'-phosphate decarboxylase">
    <location>
        <begin position="1"/>
        <end position="271"/>
    </location>
</feature>
<feature type="active site" description="Proton donor" evidence="1">
    <location>
        <position position="95"/>
    </location>
</feature>
<gene>
    <name evidence="1" type="primary">pyrF</name>
    <name type="ordered locus">Rpic_3018</name>
</gene>
<organism>
    <name type="scientific">Ralstonia pickettii (strain 12J)</name>
    <dbReference type="NCBI Taxonomy" id="402626"/>
    <lineage>
        <taxon>Bacteria</taxon>
        <taxon>Pseudomonadati</taxon>
        <taxon>Pseudomonadota</taxon>
        <taxon>Betaproteobacteria</taxon>
        <taxon>Burkholderiales</taxon>
        <taxon>Burkholderiaceae</taxon>
        <taxon>Ralstonia</taxon>
    </lineage>
</organism>
<evidence type="ECO:0000255" key="1">
    <source>
        <dbReference type="HAMAP-Rule" id="MF_01215"/>
    </source>
</evidence>
<protein>
    <recommendedName>
        <fullName evidence="1">Orotidine 5'-phosphate decarboxylase</fullName>
        <ecNumber evidence="1">4.1.1.23</ecNumber>
    </recommendedName>
    <alternativeName>
        <fullName evidence="1">OMP decarboxylase</fullName>
        <shortName evidence="1">OMPDCase</shortName>
        <shortName evidence="1">OMPdecase</shortName>
    </alternativeName>
</protein>
<keyword id="KW-0210">Decarboxylase</keyword>
<keyword id="KW-0456">Lyase</keyword>
<keyword id="KW-0665">Pyrimidine biosynthesis</keyword>